<protein>
    <recommendedName>
        <fullName>Guanine nucleotide-binding protein subunit beta-5</fullName>
    </recommendedName>
    <alternativeName>
        <fullName>Gbeta5</fullName>
    </alternativeName>
    <alternativeName>
        <fullName>Transducin beta chain 5</fullName>
    </alternativeName>
</protein>
<keyword id="KW-0472">Membrane</keyword>
<keyword id="KW-1185">Reference proteome</keyword>
<keyword id="KW-0677">Repeat</keyword>
<keyword id="KW-0807">Transducer</keyword>
<keyword id="KW-0853">WD repeat</keyword>
<sequence length="353" mass="38732">MATDGLHENETLASLKSEAESLKGKLEEERAKLHDVELHQVAERVEALGQFVMKTRRTLKGHGNKVLCMDWCKDKRRIVSSSQDGKVIVWDSFTTNKEHAVTMPCTWVMACAYAPSGCAIACGGLDNKCSVYPLTFDKNENMAAKKKSVAMHTNYLSACSFTNSDMQILTASGDGTCALWDVESGQLLQSFHGHGADVLCLDLAPSETGNTFVSGGCDKKAMVWDMRSGQCVQAFETHESDVNSVRYYPSGDAFASGSDDATCRLYDLRADREVAIYSKESIIFGASSVDFSLSGRLLFAGYNDYTINVWDVLKGSRVSILFGHENRVSTLRVSPDGTAFCSGSWDHTLRVWA</sequence>
<accession>P62882</accession>
<accession>O35354</accession>
<accession>P54314</accession>
<accession>Q5FWS8</accession>
<accession>Q91WB3</accession>
<proteinExistence type="evidence at transcript level"/>
<evidence type="ECO:0000250" key="1">
    <source>
        <dbReference type="UniProtKB" id="A1L271"/>
    </source>
</evidence>
<evidence type="ECO:0000250" key="2">
    <source>
        <dbReference type="UniProtKB" id="O14775"/>
    </source>
</evidence>
<evidence type="ECO:0000250" key="3">
    <source>
        <dbReference type="UniProtKB" id="P62881"/>
    </source>
</evidence>
<evidence type="ECO:0000269" key="4">
    <source>
    </source>
</evidence>
<evidence type="ECO:0000305" key="5"/>
<organism>
    <name type="scientific">Rattus norvegicus</name>
    <name type="common">Rat</name>
    <dbReference type="NCBI Taxonomy" id="10116"/>
    <lineage>
        <taxon>Eukaryota</taxon>
        <taxon>Metazoa</taxon>
        <taxon>Chordata</taxon>
        <taxon>Craniata</taxon>
        <taxon>Vertebrata</taxon>
        <taxon>Euteleostomi</taxon>
        <taxon>Mammalia</taxon>
        <taxon>Eutheria</taxon>
        <taxon>Euarchontoglires</taxon>
        <taxon>Glires</taxon>
        <taxon>Rodentia</taxon>
        <taxon>Myomorpha</taxon>
        <taxon>Muroidea</taxon>
        <taxon>Muridae</taxon>
        <taxon>Murinae</taxon>
        <taxon>Rattus</taxon>
    </lineage>
</organism>
<reference key="1">
    <citation type="submission" date="1997-05" db="EMBL/GenBank/DDBJ databases">
        <authorList>
            <person name="Levay K."/>
            <person name="Slepak V.Z."/>
        </authorList>
    </citation>
    <scope>NUCLEOTIDE SEQUENCE [MRNA]</scope>
    <source>
        <strain>Sprague-Dawley</strain>
        <tissue>Brain</tissue>
    </source>
</reference>
<reference key="2">
    <citation type="submission" date="2004-02" db="EMBL/GenBank/DDBJ databases">
        <title>Cloning and characterization of the rat G-protein beta 5 subunit.</title>
        <authorList>
            <person name="Puhl H.L. III"/>
            <person name="Ikeda S.R."/>
        </authorList>
    </citation>
    <scope>NUCLEOTIDE SEQUENCE [MRNA]</scope>
    <source>
        <strain>Wistar</strain>
        <tissue>Brain</tissue>
    </source>
</reference>
<reference key="3">
    <citation type="journal article" date="2004" name="Genome Res.">
        <title>The status, quality, and expansion of the NIH full-length cDNA project: the Mammalian Gene Collection (MGC).</title>
        <authorList>
            <consortium name="The MGC Project Team"/>
        </authorList>
    </citation>
    <scope>NUCLEOTIDE SEQUENCE [LARGE SCALE MRNA]</scope>
    <source>
        <tissue>Brain</tissue>
    </source>
</reference>
<reference key="4">
    <citation type="journal article" date="1998" name="Neuroscience">
        <title>Distribution of heterotrimeric G-protein beta and gamma subunits in the rat brain.</title>
        <authorList>
            <person name="Betty M."/>
            <person name="Harnish S.W."/>
            <person name="Rhodes K.J."/>
            <person name="Cockett M.I."/>
        </authorList>
    </citation>
    <scope>NUCLEOTIDE SEQUENCE [MRNA] OF 11-198</scope>
    <scope>TISSUE SPECIFICITY</scope>
    <source>
        <strain>Sprague-Dawley</strain>
        <tissue>Brain</tissue>
    </source>
</reference>
<dbReference type="EMBL" id="AF001953">
    <property type="protein sequence ID" value="AAB59974.1"/>
    <property type="molecule type" value="mRNA"/>
</dbReference>
<dbReference type="EMBL" id="AY552803">
    <property type="protein sequence ID" value="AAS59141.1"/>
    <property type="molecule type" value="mRNA"/>
</dbReference>
<dbReference type="EMBL" id="BC089221">
    <property type="protein sequence ID" value="AAH89221.1"/>
    <property type="molecule type" value="mRNA"/>
</dbReference>
<dbReference type="EMBL" id="AF022086">
    <property type="protein sequence ID" value="AAB82553.1"/>
    <property type="molecule type" value="mRNA"/>
</dbReference>
<dbReference type="RefSeq" id="NP_113958.1">
    <property type="nucleotide sequence ID" value="NM_031770.4"/>
</dbReference>
<dbReference type="SMR" id="P62882"/>
<dbReference type="BioGRID" id="249765">
    <property type="interactions" value="1"/>
</dbReference>
<dbReference type="CORUM" id="P62882"/>
<dbReference type="FunCoup" id="P62882">
    <property type="interactions" value="866"/>
</dbReference>
<dbReference type="IntAct" id="P62882">
    <property type="interactions" value="2"/>
</dbReference>
<dbReference type="MINT" id="P62882"/>
<dbReference type="STRING" id="10116.ENSRNOP00000011963"/>
<dbReference type="PhosphoSitePlus" id="P62882"/>
<dbReference type="jPOST" id="P62882"/>
<dbReference type="PaxDb" id="10116-ENSRNOP00000066690"/>
<dbReference type="GeneID" id="83579"/>
<dbReference type="KEGG" id="rno:83579"/>
<dbReference type="UCSC" id="RGD:620759">
    <property type="organism name" value="rat"/>
</dbReference>
<dbReference type="AGR" id="RGD:620759"/>
<dbReference type="CTD" id="10681"/>
<dbReference type="RGD" id="620759">
    <property type="gene designation" value="Gnb5"/>
</dbReference>
<dbReference type="eggNOG" id="KOG0286">
    <property type="taxonomic scope" value="Eukaryota"/>
</dbReference>
<dbReference type="InParanoid" id="P62882"/>
<dbReference type="OrthoDB" id="2950at9989"/>
<dbReference type="PhylomeDB" id="P62882"/>
<dbReference type="Reactome" id="R-RNO-1296041">
    <property type="pathway name" value="Activation of G protein gated Potassium channels"/>
</dbReference>
<dbReference type="Reactome" id="R-RNO-202040">
    <property type="pathway name" value="G-protein activation"/>
</dbReference>
<dbReference type="Reactome" id="R-RNO-2514859">
    <property type="pathway name" value="Inactivation, recovery and regulation of the phototransduction cascade"/>
</dbReference>
<dbReference type="Reactome" id="R-RNO-381676">
    <property type="pathway name" value="Glucagon-like Peptide-1 (GLP1) regulates insulin secretion"/>
</dbReference>
<dbReference type="Reactome" id="R-RNO-392170">
    <property type="pathway name" value="ADP signalling through P2Y purinoceptor 12"/>
</dbReference>
<dbReference type="Reactome" id="R-RNO-392451">
    <property type="pathway name" value="G beta:gamma signalling through PI3Kgamma"/>
</dbReference>
<dbReference type="Reactome" id="R-RNO-400042">
    <property type="pathway name" value="Adrenaline,noradrenaline inhibits insulin secretion"/>
</dbReference>
<dbReference type="Reactome" id="R-RNO-4086398">
    <property type="pathway name" value="Ca2+ pathway"/>
</dbReference>
<dbReference type="Reactome" id="R-RNO-416476">
    <property type="pathway name" value="G alpha (q) signalling events"/>
</dbReference>
<dbReference type="Reactome" id="R-RNO-418594">
    <property type="pathway name" value="G alpha (i) signalling events"/>
</dbReference>
<dbReference type="Reactome" id="R-RNO-418597">
    <property type="pathway name" value="G alpha (z) signalling events"/>
</dbReference>
<dbReference type="Reactome" id="R-RNO-420092">
    <property type="pathway name" value="Glucagon-type ligand receptors"/>
</dbReference>
<dbReference type="Reactome" id="R-RNO-428930">
    <property type="pathway name" value="Thromboxane signalling through TP receptor"/>
</dbReference>
<dbReference type="Reactome" id="R-RNO-432040">
    <property type="pathway name" value="Vasopressin regulates renal water homeostasis via Aquaporins"/>
</dbReference>
<dbReference type="Reactome" id="R-RNO-456926">
    <property type="pathway name" value="Thrombin signalling through proteinase activated receptors (PARs)"/>
</dbReference>
<dbReference type="Reactome" id="R-RNO-6814122">
    <property type="pathway name" value="Cooperation of PDCL (PhLP1) and TRiC/CCT in G-protein beta folding"/>
</dbReference>
<dbReference type="Reactome" id="R-RNO-8964616">
    <property type="pathway name" value="G beta:gamma signalling through CDC42"/>
</dbReference>
<dbReference type="Reactome" id="R-RNO-9856530">
    <property type="pathway name" value="High laminar flow shear stress activates signaling by PIEZO1 and PECAM1:CDH5:KDR in endothelial cells"/>
</dbReference>
<dbReference type="Reactome" id="R-RNO-997272">
    <property type="pathway name" value="Inhibition of voltage gated Ca2+ channels via Gbeta/gamma subunits"/>
</dbReference>
<dbReference type="PRO" id="PR:P62882"/>
<dbReference type="Proteomes" id="UP000002494">
    <property type="component" value="Unplaced"/>
</dbReference>
<dbReference type="GO" id="GO:0044297">
    <property type="term" value="C:cell body"/>
    <property type="evidence" value="ECO:0000314"/>
    <property type="project" value="RGD"/>
</dbReference>
<dbReference type="GO" id="GO:0051286">
    <property type="term" value="C:cell tip"/>
    <property type="evidence" value="ECO:0000266"/>
    <property type="project" value="RGD"/>
</dbReference>
<dbReference type="GO" id="GO:0005737">
    <property type="term" value="C:cytoplasm"/>
    <property type="evidence" value="ECO:0000318"/>
    <property type="project" value="GO_Central"/>
</dbReference>
<dbReference type="GO" id="GO:0005829">
    <property type="term" value="C:cytosol"/>
    <property type="evidence" value="ECO:0000266"/>
    <property type="project" value="RGD"/>
</dbReference>
<dbReference type="GO" id="GO:0030425">
    <property type="term" value="C:dendrite"/>
    <property type="evidence" value="ECO:0000266"/>
    <property type="project" value="RGD"/>
</dbReference>
<dbReference type="GO" id="GO:0005834">
    <property type="term" value="C:heterotrimeric G-protein complex"/>
    <property type="evidence" value="ECO:0000318"/>
    <property type="project" value="GO_Central"/>
</dbReference>
<dbReference type="GO" id="GO:0005634">
    <property type="term" value="C:nucleus"/>
    <property type="evidence" value="ECO:0000266"/>
    <property type="project" value="RGD"/>
</dbReference>
<dbReference type="GO" id="GO:0098688">
    <property type="term" value="C:parallel fiber to Purkinje cell synapse"/>
    <property type="evidence" value="ECO:0000266"/>
    <property type="project" value="RGD"/>
</dbReference>
<dbReference type="GO" id="GO:0005886">
    <property type="term" value="C:plasma membrane"/>
    <property type="evidence" value="ECO:0000266"/>
    <property type="project" value="RGD"/>
</dbReference>
<dbReference type="GO" id="GO:0045211">
    <property type="term" value="C:postsynaptic membrane"/>
    <property type="evidence" value="ECO:0000266"/>
    <property type="project" value="RGD"/>
</dbReference>
<dbReference type="GO" id="GO:0098793">
    <property type="term" value="C:presynapse"/>
    <property type="evidence" value="ECO:0000266"/>
    <property type="project" value="RGD"/>
</dbReference>
<dbReference type="GO" id="GO:0042734">
    <property type="term" value="C:presynaptic membrane"/>
    <property type="evidence" value="ECO:0000266"/>
    <property type="project" value="RGD"/>
</dbReference>
<dbReference type="GO" id="GO:0032991">
    <property type="term" value="C:protein-containing complex"/>
    <property type="evidence" value="ECO:0000314"/>
    <property type="project" value="RGD"/>
</dbReference>
<dbReference type="GO" id="GO:0045202">
    <property type="term" value="C:synapse"/>
    <property type="evidence" value="ECO:0000266"/>
    <property type="project" value="RGD"/>
</dbReference>
<dbReference type="GO" id="GO:0031682">
    <property type="term" value="F:G-protein gamma-subunit binding"/>
    <property type="evidence" value="ECO:0000250"/>
    <property type="project" value="CAFA"/>
</dbReference>
<dbReference type="GO" id="GO:0032794">
    <property type="term" value="F:GTPase activating protein binding"/>
    <property type="evidence" value="ECO:0000353"/>
    <property type="project" value="RGD"/>
</dbReference>
<dbReference type="GO" id="GO:0005096">
    <property type="term" value="F:GTPase activator activity"/>
    <property type="evidence" value="ECO:0000266"/>
    <property type="project" value="RGD"/>
</dbReference>
<dbReference type="GO" id="GO:0051087">
    <property type="term" value="F:protein-folding chaperone binding"/>
    <property type="evidence" value="ECO:0000250"/>
    <property type="project" value="CAFA"/>
</dbReference>
<dbReference type="GO" id="GO:0030159">
    <property type="term" value="F:signaling receptor complex adaptor activity"/>
    <property type="evidence" value="ECO:0000318"/>
    <property type="project" value="GO_Central"/>
</dbReference>
<dbReference type="GO" id="GO:1990603">
    <property type="term" value="P:dark adaptation"/>
    <property type="evidence" value="ECO:0000266"/>
    <property type="project" value="RGD"/>
</dbReference>
<dbReference type="GO" id="GO:0007212">
    <property type="term" value="P:G protein-coupled dopamine receptor signaling pathway"/>
    <property type="evidence" value="ECO:0000250"/>
    <property type="project" value="UniProtKB"/>
</dbReference>
<dbReference type="GO" id="GO:0007186">
    <property type="term" value="P:G protein-coupled receptor signaling pathway"/>
    <property type="evidence" value="ECO:0000266"/>
    <property type="project" value="RGD"/>
</dbReference>
<dbReference type="GO" id="GO:0036367">
    <property type="term" value="P:light adaption"/>
    <property type="evidence" value="ECO:0000266"/>
    <property type="project" value="RGD"/>
</dbReference>
<dbReference type="GO" id="GO:1901386">
    <property type="term" value="P:negative regulation of voltage-gated calcium channel activity"/>
    <property type="evidence" value="ECO:0000250"/>
    <property type="project" value="CAFA"/>
</dbReference>
<dbReference type="CDD" id="cd00200">
    <property type="entry name" value="WD40"/>
    <property type="match status" value="1"/>
</dbReference>
<dbReference type="FunFam" id="2.130.10.10:FF:000020">
    <property type="entry name" value="Guanine nucleotide-binding protein beta subunit"/>
    <property type="match status" value="1"/>
</dbReference>
<dbReference type="Gene3D" id="2.130.10.10">
    <property type="entry name" value="YVTN repeat-like/Quinoprotein amine dehydrogenase"/>
    <property type="match status" value="1"/>
</dbReference>
<dbReference type="InterPro" id="IPR020472">
    <property type="entry name" value="G-protein_beta_WD-40_rep"/>
</dbReference>
<dbReference type="InterPro" id="IPR001632">
    <property type="entry name" value="Gprotein_B"/>
</dbReference>
<dbReference type="InterPro" id="IPR016346">
    <property type="entry name" value="Guanine_nucleotide-bd_bsu"/>
</dbReference>
<dbReference type="InterPro" id="IPR015943">
    <property type="entry name" value="WD40/YVTN_repeat-like_dom_sf"/>
</dbReference>
<dbReference type="InterPro" id="IPR019775">
    <property type="entry name" value="WD40_repeat_CS"/>
</dbReference>
<dbReference type="InterPro" id="IPR036322">
    <property type="entry name" value="WD40_repeat_dom_sf"/>
</dbReference>
<dbReference type="InterPro" id="IPR001680">
    <property type="entry name" value="WD40_rpt"/>
</dbReference>
<dbReference type="PANTHER" id="PTHR19850">
    <property type="entry name" value="GUANINE NUCLEOTIDE-BINDING PROTEIN BETA G PROTEIN BETA"/>
    <property type="match status" value="1"/>
</dbReference>
<dbReference type="Pfam" id="PF25391">
    <property type="entry name" value="WD40_Gbeta"/>
    <property type="match status" value="1"/>
</dbReference>
<dbReference type="PIRSF" id="PIRSF002394">
    <property type="entry name" value="GN-bd_beta"/>
    <property type="match status" value="1"/>
</dbReference>
<dbReference type="PRINTS" id="PR00319">
    <property type="entry name" value="GPROTEINB"/>
</dbReference>
<dbReference type="PRINTS" id="PR00320">
    <property type="entry name" value="GPROTEINBRPT"/>
</dbReference>
<dbReference type="SMART" id="SM00320">
    <property type="entry name" value="WD40"/>
    <property type="match status" value="7"/>
</dbReference>
<dbReference type="SUPFAM" id="SSF50978">
    <property type="entry name" value="WD40 repeat-like"/>
    <property type="match status" value="1"/>
</dbReference>
<dbReference type="PROSITE" id="PS00678">
    <property type="entry name" value="WD_REPEATS_1"/>
    <property type="match status" value="3"/>
</dbReference>
<dbReference type="PROSITE" id="PS50082">
    <property type="entry name" value="WD_REPEATS_2"/>
    <property type="match status" value="6"/>
</dbReference>
<dbReference type="PROSITE" id="PS50294">
    <property type="entry name" value="WD_REPEATS_REGION"/>
    <property type="match status" value="1"/>
</dbReference>
<name>GNB5_RAT</name>
<gene>
    <name type="primary">Gnb5</name>
</gene>
<feature type="chain" id="PRO_0000127709" description="Guanine nucleotide-binding protein subunit beta-5">
    <location>
        <begin position="1"/>
        <end position="353"/>
    </location>
</feature>
<feature type="repeat" description="WD 1">
    <location>
        <begin position="61"/>
        <end position="100"/>
    </location>
</feature>
<feature type="repeat" description="WD 2">
    <location>
        <begin position="103"/>
        <end position="142"/>
    </location>
</feature>
<feature type="repeat" description="WD 3">
    <location>
        <begin position="151"/>
        <end position="192"/>
    </location>
</feature>
<feature type="repeat" description="WD 4">
    <location>
        <begin position="194"/>
        <end position="236"/>
    </location>
</feature>
<feature type="repeat" description="WD 5">
    <location>
        <begin position="237"/>
        <end position="276"/>
    </location>
</feature>
<feature type="repeat" description="WD 6">
    <location>
        <begin position="278"/>
        <end position="320"/>
    </location>
</feature>
<feature type="repeat" description="WD 7">
    <location>
        <begin position="323"/>
        <end position="352"/>
    </location>
</feature>
<comment type="function">
    <text evidence="1 2 3">Enhances GTPase-activating protein (GAP) activity of regulator of G protein signaling (RGS) proteins, such as RGS7 and RGS9, hence involved in the termination of the signaling initiated by the G protein coupled receptors (GPCRs) by accelerating the GTP hydrolysis on the G-alpha subunits, thereby promoting their inactivation (By similarity). Increases RGS7 GTPase-activating protein (GAP) activity, thereby regulating mood and cognition (By similarity). Increases RGS9 GTPase-activating protein (GAP) activity, hence contributes to the deactivation of G protein signaling initiated by D(2) dopamine receptors (By similarity). May play an important role in neuronal signaling, including in the parasympathetic, but not sympathetic, control of heart rate (By similarity).</text>
</comment>
<comment type="subunit">
    <text evidence="2">Component of a complex composed of RGS9 (isoform RGS9-1), GNB5 and RGS9BP; within this complex, the presence of GNB5 stabilizes both itself and RGS9 and increases RGS9 GTPase-activating protein (GAP) activity. Interacts with RGS7, forming the RGS7-GNB5 complex; within this complex, the presence of GNB5 increases RGS7 GTPase-activating protein (GAP) activity. Interacts with GPR158; promotes the GTPase activator activity of the RGS7-GNB5 complex in absence of glycine, in contrast GTPase activator activity of the RGS7-GNB5 complex is inhibited in presence of glycine. Interacts with RGS6.</text>
</comment>
<comment type="subcellular location">
    <subcellularLocation>
        <location evidence="3">Membrane</location>
    </subcellularLocation>
</comment>
<comment type="tissue specificity">
    <text evidence="4">Detected in brain.</text>
</comment>
<comment type="similarity">
    <text evidence="5">Belongs to the WD repeat G protein beta family.</text>
</comment>